<reference evidence="5" key="1">
    <citation type="journal article" date="2012" name="Syst. Biol.">
        <title>Peptidomics-based phylogeny and biogeography of Mantophasmatodea (Hexapoda).</title>
        <authorList>
            <person name="Predel R."/>
            <person name="Neupert S."/>
            <person name="Huetteroth W."/>
            <person name="Kahnt J."/>
            <person name="Waidelich D."/>
            <person name="Roth S."/>
        </authorList>
    </citation>
    <scope>PROTEIN SEQUENCE</scope>
    <scope>PYROGLUTAMATE FORMATION AT GLN-1</scope>
    <scope>AMIDATION AT PHE-10</scope>
    <source>
        <tissue evidence="3">Corpora cardiaca</tissue>
    </source>
</reference>
<comment type="function">
    <text evidence="1">Myoinhibiting neuropeptide.</text>
</comment>
<comment type="subcellular location">
    <subcellularLocation>
        <location evidence="6">Secreted</location>
    </subcellularLocation>
</comment>
<comment type="similarity">
    <text evidence="2">Belongs to the myosuppressin family.</text>
</comment>
<dbReference type="GO" id="GO:0005576">
    <property type="term" value="C:extracellular region"/>
    <property type="evidence" value="ECO:0007669"/>
    <property type="project" value="UniProtKB-SubCell"/>
</dbReference>
<dbReference type="GO" id="GO:0007218">
    <property type="term" value="P:neuropeptide signaling pathway"/>
    <property type="evidence" value="ECO:0007669"/>
    <property type="project" value="UniProtKB-KW"/>
</dbReference>
<evidence type="ECO:0000250" key="1">
    <source>
        <dbReference type="UniProtKB" id="P61849"/>
    </source>
</evidence>
<evidence type="ECO:0000255" key="2"/>
<evidence type="ECO:0000269" key="3">
    <source>
    </source>
</evidence>
<evidence type="ECO:0000303" key="4">
    <source>
    </source>
</evidence>
<evidence type="ECO:0000305" key="5"/>
<evidence type="ECO:0000305" key="6">
    <source>
    </source>
</evidence>
<feature type="peptide" id="PRO_0000421714" description="Myosuppressin" evidence="3">
    <location>
        <begin position="1"/>
        <end position="10"/>
    </location>
</feature>
<feature type="modified residue" description="Pyrrolidone carboxylic acid" evidence="3">
    <location>
        <position position="1"/>
    </location>
</feature>
<feature type="modified residue" description="Phenylalanine amide" evidence="3">
    <location>
        <position position="10"/>
    </location>
</feature>
<organism>
    <name type="scientific">Karoophasma botterkloofense</name>
    <name type="common">Gladiator</name>
    <name type="synonym">Heel-walker</name>
    <dbReference type="NCBI Taxonomy" id="253132"/>
    <lineage>
        <taxon>Eukaryota</taxon>
        <taxon>Metazoa</taxon>
        <taxon>Ecdysozoa</taxon>
        <taxon>Arthropoda</taxon>
        <taxon>Hexapoda</taxon>
        <taxon>Insecta</taxon>
        <taxon>Pterygota</taxon>
        <taxon>Neoptera</taxon>
        <taxon>Polyneoptera</taxon>
        <taxon>Mantophasmatodea</taxon>
        <taxon>Austrophasmatidae</taxon>
        <taxon>Karoophasma</taxon>
    </lineage>
</organism>
<proteinExistence type="evidence at protein level"/>
<accession>B3A057</accession>
<protein>
    <recommendedName>
        <fullName evidence="4">Myosuppressin</fullName>
        <shortName evidence="4">MS</shortName>
    </recommendedName>
</protein>
<name>NEMS_KARBO</name>
<sequence>QDVDHVFLRF</sequence>
<keyword id="KW-0027">Amidation</keyword>
<keyword id="KW-0903">Direct protein sequencing</keyword>
<keyword id="KW-0527">Neuropeptide</keyword>
<keyword id="KW-0873">Pyrrolidone carboxylic acid</keyword>
<keyword id="KW-0964">Secreted</keyword>